<sequence>MGKITAIKKLKRLYRVDLSGFDDEDKIYLSEDTIVHFFLNVDKELDDADLEEIQSYDQFAQGKSLALYYISFKMRTSSEVRKYLSEHEIDNTDQIDEVINILTKNNLINDKAYAENFIEGKISMGSAGPYQIKQKLITKGIDPLIIDQALSNIYDEEKQIDVAYKLAEKTNRTYGQRLTLKQLKDKIIQNLMNKGFTYSISSIALESLELETDEENETQLLYTALEKVAKRYSKNYEGYERKQKVTQALARKGFSYDDISSALRDYTFPE</sequence>
<keyword id="KW-0963">Cytoplasm</keyword>
<keyword id="KW-1185">Reference proteome</keyword>
<accession>Q9CDN7</accession>
<organism>
    <name type="scientific">Lactococcus lactis subsp. lactis (strain IL1403)</name>
    <name type="common">Streptococcus lactis</name>
    <dbReference type="NCBI Taxonomy" id="272623"/>
    <lineage>
        <taxon>Bacteria</taxon>
        <taxon>Bacillati</taxon>
        <taxon>Bacillota</taxon>
        <taxon>Bacilli</taxon>
        <taxon>Lactobacillales</taxon>
        <taxon>Streptococcaceae</taxon>
        <taxon>Lactococcus</taxon>
    </lineage>
</organism>
<feature type="chain" id="PRO_0000162439" description="Regulatory protein RecX">
    <location>
        <begin position="1"/>
        <end position="270"/>
    </location>
</feature>
<name>RECX_LACLA</name>
<evidence type="ECO:0000250" key="1"/>
<evidence type="ECO:0000305" key="2"/>
<comment type="function">
    <text evidence="1">Modulates RecA activity.</text>
</comment>
<comment type="subcellular location">
    <subcellularLocation>
        <location evidence="2">Cytoplasm</location>
    </subcellularLocation>
</comment>
<comment type="similarity">
    <text evidence="2">Belongs to the RecX family.</text>
</comment>
<proteinExistence type="inferred from homology"/>
<reference key="1">
    <citation type="journal article" date="2001" name="Genome Res.">
        <title>The complete genome sequence of the lactic acid bacterium Lactococcus lactis ssp. lactis IL1403.</title>
        <authorList>
            <person name="Bolotin A."/>
            <person name="Wincker P."/>
            <person name="Mauger S."/>
            <person name="Jaillon O."/>
            <person name="Malarme K."/>
            <person name="Weissenbach J."/>
            <person name="Ehrlich S.D."/>
            <person name="Sorokin A."/>
        </authorList>
    </citation>
    <scope>NUCLEOTIDE SEQUENCE [LARGE SCALE GENOMIC DNA]</scope>
    <source>
        <strain>IL1403</strain>
    </source>
</reference>
<dbReference type="EMBL" id="AE005176">
    <property type="protein sequence ID" value="AAK06280.1"/>
    <property type="molecule type" value="Genomic_DNA"/>
</dbReference>
<dbReference type="PIR" id="F86897">
    <property type="entry name" value="F86897"/>
</dbReference>
<dbReference type="RefSeq" id="NP_268339.1">
    <property type="nucleotide sequence ID" value="NC_002662.1"/>
</dbReference>
<dbReference type="RefSeq" id="WP_010906366.1">
    <property type="nucleotide sequence ID" value="NC_002662.1"/>
</dbReference>
<dbReference type="SMR" id="Q9CDN7"/>
<dbReference type="PaxDb" id="272623-L43222"/>
<dbReference type="EnsemblBacteria" id="AAK06280">
    <property type="protein sequence ID" value="AAK06280"/>
    <property type="gene ID" value="L43222"/>
</dbReference>
<dbReference type="KEGG" id="lla:L43222"/>
<dbReference type="PATRIC" id="fig|272623.7.peg.2342"/>
<dbReference type="eggNOG" id="COG2137">
    <property type="taxonomic scope" value="Bacteria"/>
</dbReference>
<dbReference type="HOGENOM" id="CLU_066607_4_0_9"/>
<dbReference type="OrthoDB" id="5421057at2"/>
<dbReference type="Proteomes" id="UP000002196">
    <property type="component" value="Chromosome"/>
</dbReference>
<dbReference type="GO" id="GO:0005737">
    <property type="term" value="C:cytoplasm"/>
    <property type="evidence" value="ECO:0007669"/>
    <property type="project" value="UniProtKB-SubCell"/>
</dbReference>
<dbReference type="GO" id="GO:0006282">
    <property type="term" value="P:regulation of DNA repair"/>
    <property type="evidence" value="ECO:0007669"/>
    <property type="project" value="UniProtKB-UniRule"/>
</dbReference>
<dbReference type="Gene3D" id="1.10.10.10">
    <property type="entry name" value="Winged helix-like DNA-binding domain superfamily/Winged helix DNA-binding domain"/>
    <property type="match status" value="4"/>
</dbReference>
<dbReference type="HAMAP" id="MF_01114">
    <property type="entry name" value="RecX"/>
    <property type="match status" value="1"/>
</dbReference>
<dbReference type="InterPro" id="IPR053926">
    <property type="entry name" value="RecX_HTH_1st"/>
</dbReference>
<dbReference type="InterPro" id="IPR053924">
    <property type="entry name" value="RecX_HTH_2nd"/>
</dbReference>
<dbReference type="InterPro" id="IPR053925">
    <property type="entry name" value="RecX_HTH_3rd"/>
</dbReference>
<dbReference type="InterPro" id="IPR003783">
    <property type="entry name" value="Regulatory_RecX"/>
</dbReference>
<dbReference type="InterPro" id="IPR036388">
    <property type="entry name" value="WH-like_DNA-bd_sf"/>
</dbReference>
<dbReference type="NCBIfam" id="NF010733">
    <property type="entry name" value="PRK14135.1"/>
    <property type="match status" value="1"/>
</dbReference>
<dbReference type="PANTHER" id="PTHR33602">
    <property type="entry name" value="REGULATORY PROTEIN RECX FAMILY PROTEIN"/>
    <property type="match status" value="1"/>
</dbReference>
<dbReference type="PANTHER" id="PTHR33602:SF1">
    <property type="entry name" value="REGULATORY PROTEIN RECX FAMILY PROTEIN"/>
    <property type="match status" value="1"/>
</dbReference>
<dbReference type="Pfam" id="PF21982">
    <property type="entry name" value="RecX_HTH1"/>
    <property type="match status" value="1"/>
</dbReference>
<dbReference type="Pfam" id="PF02631">
    <property type="entry name" value="RecX_HTH2"/>
    <property type="match status" value="1"/>
</dbReference>
<dbReference type="Pfam" id="PF21981">
    <property type="entry name" value="RecX_HTH3"/>
    <property type="match status" value="2"/>
</dbReference>
<gene>
    <name type="primary">recX</name>
    <name type="ordered locus">LL2182</name>
    <name type="ORF">L43222</name>
</gene>
<protein>
    <recommendedName>
        <fullName>Regulatory protein RecX</fullName>
    </recommendedName>
</protein>